<sequence length="293" mass="31924">MIETTDSLRDCLAPAKLNLFLHITGRRPDGYHTLQTVFQLLDWGDTLHFTRRDDGLITRSTEIADVPPEHDLTVRAATLLKAHTGSPEGVDIEIDKRLPMGAGLGGGSSDAATTLLALNRLWKLNLPRLELQALALKLGADVPFFVFGKNAFAQGVGEALDVVQLPPRHFLVVTPRVHVPTAAIFSEKALTRDSKPLTITDFPAELSCNTEWPESFGRNDMQQVVVGKYAEVAQVLRWFENVAPARMSGSGASVFAAFRSKAEAEAAQAKLPAEWNSAVTASLDQHPLFTFAS</sequence>
<comment type="function">
    <text evidence="1">Catalyzes the phosphorylation of the position 2 hydroxy group of 4-diphosphocytidyl-2C-methyl-D-erythritol.</text>
</comment>
<comment type="catalytic activity">
    <reaction evidence="1">
        <text>4-CDP-2-C-methyl-D-erythritol + ATP = 4-CDP-2-C-methyl-D-erythritol 2-phosphate + ADP + H(+)</text>
        <dbReference type="Rhea" id="RHEA:18437"/>
        <dbReference type="ChEBI" id="CHEBI:15378"/>
        <dbReference type="ChEBI" id="CHEBI:30616"/>
        <dbReference type="ChEBI" id="CHEBI:57823"/>
        <dbReference type="ChEBI" id="CHEBI:57919"/>
        <dbReference type="ChEBI" id="CHEBI:456216"/>
        <dbReference type="EC" id="2.7.1.148"/>
    </reaction>
</comment>
<comment type="pathway">
    <text evidence="1">Isoprenoid biosynthesis; isopentenyl diphosphate biosynthesis via DXP pathway; isopentenyl diphosphate from 1-deoxy-D-xylulose 5-phosphate: step 3/6.</text>
</comment>
<comment type="similarity">
    <text evidence="1">Belongs to the GHMP kinase family. IspE subfamily.</text>
</comment>
<accession>B2SXG6</accession>
<keyword id="KW-0067">ATP-binding</keyword>
<keyword id="KW-0414">Isoprene biosynthesis</keyword>
<keyword id="KW-0418">Kinase</keyword>
<keyword id="KW-0547">Nucleotide-binding</keyword>
<keyword id="KW-0808">Transferase</keyword>
<feature type="chain" id="PRO_1000092069" description="4-diphosphocytidyl-2-C-methyl-D-erythritol kinase">
    <location>
        <begin position="1"/>
        <end position="293"/>
    </location>
</feature>
<feature type="active site" evidence="1">
    <location>
        <position position="16"/>
    </location>
</feature>
<feature type="active site" evidence="1">
    <location>
        <position position="141"/>
    </location>
</feature>
<feature type="binding site" evidence="1">
    <location>
        <begin position="99"/>
        <end position="109"/>
    </location>
    <ligand>
        <name>ATP</name>
        <dbReference type="ChEBI" id="CHEBI:30616"/>
    </ligand>
</feature>
<reference key="1">
    <citation type="journal article" date="2011" name="J. Bacteriol.">
        <title>Complete genome sequence of the plant growth-promoting endophyte Burkholderia phytofirmans strain PsJN.</title>
        <authorList>
            <person name="Weilharter A."/>
            <person name="Mitter B."/>
            <person name="Shin M.V."/>
            <person name="Chain P.S."/>
            <person name="Nowak J."/>
            <person name="Sessitsch A."/>
        </authorList>
    </citation>
    <scope>NUCLEOTIDE SEQUENCE [LARGE SCALE GENOMIC DNA]</scope>
    <source>
        <strain>DSM 17436 / LMG 22146 / PsJN</strain>
    </source>
</reference>
<protein>
    <recommendedName>
        <fullName evidence="1">4-diphosphocytidyl-2-C-methyl-D-erythritol kinase</fullName>
        <shortName evidence="1">CMK</shortName>
        <ecNumber evidence="1">2.7.1.148</ecNumber>
    </recommendedName>
    <alternativeName>
        <fullName evidence="1">4-(cytidine-5'-diphospho)-2-C-methyl-D-erythritol kinase</fullName>
    </alternativeName>
</protein>
<name>ISPE_PARPJ</name>
<organism>
    <name type="scientific">Paraburkholderia phytofirmans (strain DSM 17436 / LMG 22146 / PsJN)</name>
    <name type="common">Burkholderia phytofirmans</name>
    <dbReference type="NCBI Taxonomy" id="398527"/>
    <lineage>
        <taxon>Bacteria</taxon>
        <taxon>Pseudomonadati</taxon>
        <taxon>Pseudomonadota</taxon>
        <taxon>Betaproteobacteria</taxon>
        <taxon>Burkholderiales</taxon>
        <taxon>Burkholderiaceae</taxon>
        <taxon>Paraburkholderia</taxon>
    </lineage>
</organism>
<dbReference type="EC" id="2.7.1.148" evidence="1"/>
<dbReference type="EMBL" id="CP001052">
    <property type="protein sequence ID" value="ACD15011.1"/>
    <property type="molecule type" value="Genomic_DNA"/>
</dbReference>
<dbReference type="RefSeq" id="WP_012431649.1">
    <property type="nucleotide sequence ID" value="NC_010681.1"/>
</dbReference>
<dbReference type="SMR" id="B2SXG6"/>
<dbReference type="STRING" id="398527.Bphyt_0586"/>
<dbReference type="KEGG" id="bpy:Bphyt_0586"/>
<dbReference type="eggNOG" id="COG1947">
    <property type="taxonomic scope" value="Bacteria"/>
</dbReference>
<dbReference type="HOGENOM" id="CLU_053057_3_0_4"/>
<dbReference type="OrthoDB" id="9809438at2"/>
<dbReference type="UniPathway" id="UPA00056">
    <property type="reaction ID" value="UER00094"/>
</dbReference>
<dbReference type="Proteomes" id="UP000001739">
    <property type="component" value="Chromosome 1"/>
</dbReference>
<dbReference type="GO" id="GO:0050515">
    <property type="term" value="F:4-(cytidine 5'-diphospho)-2-C-methyl-D-erythritol kinase activity"/>
    <property type="evidence" value="ECO:0007669"/>
    <property type="project" value="UniProtKB-UniRule"/>
</dbReference>
<dbReference type="GO" id="GO:0005524">
    <property type="term" value="F:ATP binding"/>
    <property type="evidence" value="ECO:0007669"/>
    <property type="project" value="UniProtKB-UniRule"/>
</dbReference>
<dbReference type="GO" id="GO:0019288">
    <property type="term" value="P:isopentenyl diphosphate biosynthetic process, methylerythritol 4-phosphate pathway"/>
    <property type="evidence" value="ECO:0007669"/>
    <property type="project" value="UniProtKB-UniRule"/>
</dbReference>
<dbReference type="GO" id="GO:0016114">
    <property type="term" value="P:terpenoid biosynthetic process"/>
    <property type="evidence" value="ECO:0007669"/>
    <property type="project" value="InterPro"/>
</dbReference>
<dbReference type="Gene3D" id="3.30.230.10">
    <property type="match status" value="1"/>
</dbReference>
<dbReference type="Gene3D" id="3.30.70.890">
    <property type="entry name" value="GHMP kinase, C-terminal domain"/>
    <property type="match status" value="1"/>
</dbReference>
<dbReference type="HAMAP" id="MF_00061">
    <property type="entry name" value="IspE"/>
    <property type="match status" value="1"/>
</dbReference>
<dbReference type="InterPro" id="IPR013750">
    <property type="entry name" value="GHMP_kinase_C_dom"/>
</dbReference>
<dbReference type="InterPro" id="IPR036554">
    <property type="entry name" value="GHMP_kinase_C_sf"/>
</dbReference>
<dbReference type="InterPro" id="IPR006204">
    <property type="entry name" value="GHMP_kinase_N_dom"/>
</dbReference>
<dbReference type="InterPro" id="IPR004424">
    <property type="entry name" value="IspE"/>
</dbReference>
<dbReference type="InterPro" id="IPR020568">
    <property type="entry name" value="Ribosomal_Su5_D2-typ_SF"/>
</dbReference>
<dbReference type="InterPro" id="IPR014721">
    <property type="entry name" value="Ribsml_uS5_D2-typ_fold_subgr"/>
</dbReference>
<dbReference type="NCBIfam" id="TIGR00154">
    <property type="entry name" value="ispE"/>
    <property type="match status" value="1"/>
</dbReference>
<dbReference type="NCBIfam" id="NF011202">
    <property type="entry name" value="PRK14608.1"/>
    <property type="match status" value="1"/>
</dbReference>
<dbReference type="PANTHER" id="PTHR43527">
    <property type="entry name" value="4-DIPHOSPHOCYTIDYL-2-C-METHYL-D-ERYTHRITOL KINASE, CHLOROPLASTIC"/>
    <property type="match status" value="1"/>
</dbReference>
<dbReference type="PANTHER" id="PTHR43527:SF2">
    <property type="entry name" value="4-DIPHOSPHOCYTIDYL-2-C-METHYL-D-ERYTHRITOL KINASE, CHLOROPLASTIC"/>
    <property type="match status" value="1"/>
</dbReference>
<dbReference type="Pfam" id="PF08544">
    <property type="entry name" value="GHMP_kinases_C"/>
    <property type="match status" value="1"/>
</dbReference>
<dbReference type="Pfam" id="PF00288">
    <property type="entry name" value="GHMP_kinases_N"/>
    <property type="match status" value="1"/>
</dbReference>
<dbReference type="PIRSF" id="PIRSF010376">
    <property type="entry name" value="IspE"/>
    <property type="match status" value="1"/>
</dbReference>
<dbReference type="SUPFAM" id="SSF55060">
    <property type="entry name" value="GHMP Kinase, C-terminal domain"/>
    <property type="match status" value="1"/>
</dbReference>
<dbReference type="SUPFAM" id="SSF54211">
    <property type="entry name" value="Ribosomal protein S5 domain 2-like"/>
    <property type="match status" value="1"/>
</dbReference>
<gene>
    <name evidence="1" type="primary">ispE</name>
    <name type="ordered locus">Bphyt_0586</name>
</gene>
<proteinExistence type="inferred from homology"/>
<evidence type="ECO:0000255" key="1">
    <source>
        <dbReference type="HAMAP-Rule" id="MF_00061"/>
    </source>
</evidence>